<proteinExistence type="inferred from homology"/>
<keyword id="KW-0378">Hydrolase</keyword>
<keyword id="KW-0464">Manganese</keyword>
<sequence length="564" mass="58273">MTTASAASERAVRQRLVRVARGLEAGDLLVRGAQVVQPATGEVFGADVLVAEGRVAALVGPGLGVRAARTVEARGAYLAPGFLDAHIHIESSLLTPARFAAAVLPRGTTAVVAEPHETVNVMGLSGLRWMLEAGKGSGLRVFGSVPSSVPASPFECGGAVLDAAEVAEALRLPGVLGLAEMMNYPGVLNLERGAWEVLDAGYGGRIDGHAAGVAGRDLQAYAAAGPHSDHEATTPEEARERLRAGLWLMVREGSAARNLEALLPVLRERPRRAMLVSDDVSVDELLSLGHLDRLLRACVAGGLHPADAVALVTCNPAEYWGLHDLGLVAPGYHADFVLLRDLERFEVLDTFVGGVEAQAGSETPPLPGGGVNLGPSWATATFEVPASWPVMQVRPDQITTGVGAPGSGDARLVVADRYGRGEHAACWTSGTGLTGGALAISLLHDAHHVAVLGGSNADVRAAGRALEAMGGGVVVVAGGEVRSNLPLPYAGLMSDLPPQEAAARLSEVTAAARVLGCTLPYPVTTLSFLGLSVIPALKLTPRGLLDVGAWQLLPRETVRVGAEG</sequence>
<dbReference type="EC" id="3.5.4.2" evidence="1"/>
<dbReference type="EMBL" id="CP000359">
    <property type="protein sequence ID" value="ABF44723.1"/>
    <property type="molecule type" value="Genomic_DNA"/>
</dbReference>
<dbReference type="RefSeq" id="WP_011529567.1">
    <property type="nucleotide sequence ID" value="NC_008025.1"/>
</dbReference>
<dbReference type="SMR" id="Q1J1B1"/>
<dbReference type="STRING" id="319795.Dgeo_0420"/>
<dbReference type="KEGG" id="dge:Dgeo_0420"/>
<dbReference type="eggNOG" id="COG1001">
    <property type="taxonomic scope" value="Bacteria"/>
</dbReference>
<dbReference type="HOGENOM" id="CLU_027935_0_0_0"/>
<dbReference type="Proteomes" id="UP000002431">
    <property type="component" value="Chromosome"/>
</dbReference>
<dbReference type="GO" id="GO:0000034">
    <property type="term" value="F:adenine deaminase activity"/>
    <property type="evidence" value="ECO:0007669"/>
    <property type="project" value="UniProtKB-UniRule"/>
</dbReference>
<dbReference type="GO" id="GO:0006146">
    <property type="term" value="P:adenine catabolic process"/>
    <property type="evidence" value="ECO:0007669"/>
    <property type="project" value="InterPro"/>
</dbReference>
<dbReference type="Gene3D" id="3.20.20.140">
    <property type="entry name" value="Metal-dependent hydrolases"/>
    <property type="match status" value="1"/>
</dbReference>
<dbReference type="Gene3D" id="2.30.40.10">
    <property type="entry name" value="Urease, subunit C, domain 1"/>
    <property type="match status" value="1"/>
</dbReference>
<dbReference type="HAMAP" id="MF_01518">
    <property type="entry name" value="Adenine_deamin"/>
    <property type="match status" value="1"/>
</dbReference>
<dbReference type="InterPro" id="IPR006679">
    <property type="entry name" value="Adenine_deam"/>
</dbReference>
<dbReference type="InterPro" id="IPR026912">
    <property type="entry name" value="Adenine_deam_C"/>
</dbReference>
<dbReference type="InterPro" id="IPR006680">
    <property type="entry name" value="Amidohydro-rel"/>
</dbReference>
<dbReference type="InterPro" id="IPR011059">
    <property type="entry name" value="Metal-dep_hydrolase_composite"/>
</dbReference>
<dbReference type="InterPro" id="IPR032466">
    <property type="entry name" value="Metal_Hydrolase"/>
</dbReference>
<dbReference type="PANTHER" id="PTHR11113:SF2">
    <property type="entry name" value="ADENINE DEAMINASE"/>
    <property type="match status" value="1"/>
</dbReference>
<dbReference type="PANTHER" id="PTHR11113">
    <property type="entry name" value="N-ACETYLGLUCOSAMINE-6-PHOSPHATE DEACETYLASE"/>
    <property type="match status" value="1"/>
</dbReference>
<dbReference type="Pfam" id="PF13382">
    <property type="entry name" value="Adenine_deam_C"/>
    <property type="match status" value="1"/>
</dbReference>
<dbReference type="Pfam" id="PF01979">
    <property type="entry name" value="Amidohydro_1"/>
    <property type="match status" value="1"/>
</dbReference>
<dbReference type="SUPFAM" id="SSF51338">
    <property type="entry name" value="Composite domain of metallo-dependent hydrolases"/>
    <property type="match status" value="1"/>
</dbReference>
<dbReference type="SUPFAM" id="SSF51556">
    <property type="entry name" value="Metallo-dependent hydrolases"/>
    <property type="match status" value="1"/>
</dbReference>
<accession>Q1J1B1</accession>
<feature type="chain" id="PRO_0000292380" description="Adenine deaminase">
    <location>
        <begin position="1"/>
        <end position="564"/>
    </location>
</feature>
<protein>
    <recommendedName>
        <fullName evidence="1">Adenine deaminase</fullName>
        <shortName evidence="1">Adenase</shortName>
        <shortName evidence="1">Adenine aminase</shortName>
        <ecNumber evidence="1">3.5.4.2</ecNumber>
    </recommendedName>
</protein>
<comment type="catalytic activity">
    <reaction evidence="1">
        <text>adenine + H2O + H(+) = hypoxanthine + NH4(+)</text>
        <dbReference type="Rhea" id="RHEA:23688"/>
        <dbReference type="ChEBI" id="CHEBI:15377"/>
        <dbReference type="ChEBI" id="CHEBI:15378"/>
        <dbReference type="ChEBI" id="CHEBI:16708"/>
        <dbReference type="ChEBI" id="CHEBI:17368"/>
        <dbReference type="ChEBI" id="CHEBI:28938"/>
        <dbReference type="EC" id="3.5.4.2"/>
    </reaction>
</comment>
<comment type="cofactor">
    <cofactor evidence="1">
        <name>Mn(2+)</name>
        <dbReference type="ChEBI" id="CHEBI:29035"/>
    </cofactor>
</comment>
<comment type="similarity">
    <text evidence="1">Belongs to the metallo-dependent hydrolases superfamily. Adenine deaminase family.</text>
</comment>
<name>ADEC_DEIGD</name>
<organism>
    <name type="scientific">Deinococcus geothermalis (strain DSM 11300 / CIP 105573 / AG-3a)</name>
    <dbReference type="NCBI Taxonomy" id="319795"/>
    <lineage>
        <taxon>Bacteria</taxon>
        <taxon>Thermotogati</taxon>
        <taxon>Deinococcota</taxon>
        <taxon>Deinococci</taxon>
        <taxon>Deinococcales</taxon>
        <taxon>Deinococcaceae</taxon>
        <taxon>Deinococcus</taxon>
    </lineage>
</organism>
<evidence type="ECO:0000255" key="1">
    <source>
        <dbReference type="HAMAP-Rule" id="MF_01518"/>
    </source>
</evidence>
<gene>
    <name evidence="1" type="primary">ade</name>
    <name type="ordered locus">Dgeo_0420</name>
</gene>
<reference key="1">
    <citation type="submission" date="2006-04" db="EMBL/GenBank/DDBJ databases">
        <title>Complete sequence of chromosome of Deinococcus geothermalis DSM 11300.</title>
        <authorList>
            <person name="Copeland A."/>
            <person name="Lucas S."/>
            <person name="Lapidus A."/>
            <person name="Barry K."/>
            <person name="Detter J.C."/>
            <person name="Glavina del Rio T."/>
            <person name="Hammon N."/>
            <person name="Israni S."/>
            <person name="Dalin E."/>
            <person name="Tice H."/>
            <person name="Pitluck S."/>
            <person name="Brettin T."/>
            <person name="Bruce D."/>
            <person name="Han C."/>
            <person name="Tapia R."/>
            <person name="Saunders E."/>
            <person name="Gilna P."/>
            <person name="Schmutz J."/>
            <person name="Larimer F."/>
            <person name="Land M."/>
            <person name="Hauser L."/>
            <person name="Kyrpides N."/>
            <person name="Kim E."/>
            <person name="Daly M.J."/>
            <person name="Fredrickson J.K."/>
            <person name="Makarova K.S."/>
            <person name="Gaidamakova E.K."/>
            <person name="Zhai M."/>
            <person name="Richardson P."/>
        </authorList>
    </citation>
    <scope>NUCLEOTIDE SEQUENCE [LARGE SCALE GENOMIC DNA]</scope>
    <source>
        <strain>DSM 11300 / CIP 105573 / AG-3a</strain>
    </source>
</reference>